<feature type="chain" id="PRO_0000233670" description="Cytochrome b6-f complex subunit 6">
    <location>
        <begin position="1"/>
        <end position="31"/>
    </location>
</feature>
<feature type="transmembrane region" description="Helical" evidence="1">
    <location>
        <begin position="4"/>
        <end position="26"/>
    </location>
</feature>
<keyword id="KW-0150">Chloroplast</keyword>
<keyword id="KW-0249">Electron transport</keyword>
<keyword id="KW-0472">Membrane</keyword>
<keyword id="KW-0602">Photosynthesis</keyword>
<keyword id="KW-0934">Plastid</keyword>
<keyword id="KW-0691">RNA editing</keyword>
<keyword id="KW-0793">Thylakoid</keyword>
<keyword id="KW-0812">Transmembrane</keyword>
<keyword id="KW-1133">Transmembrane helix</keyword>
<keyword id="KW-0813">Transport</keyword>
<geneLocation type="chloroplast"/>
<accession>Q5K3T2</accession>
<dbReference type="EMBL" id="AJ704432">
    <property type="protein sequence ID" value="CAG28644.1"/>
    <property type="molecule type" value="Genomic_DNA"/>
</dbReference>
<dbReference type="SMR" id="Q5K3T2"/>
<dbReference type="GO" id="GO:0009535">
    <property type="term" value="C:chloroplast thylakoid membrane"/>
    <property type="evidence" value="ECO:0007669"/>
    <property type="project" value="UniProtKB-SubCell"/>
</dbReference>
<dbReference type="GO" id="GO:0009512">
    <property type="term" value="C:cytochrome b6f complex"/>
    <property type="evidence" value="ECO:0007669"/>
    <property type="project" value="InterPro"/>
</dbReference>
<dbReference type="GO" id="GO:0045158">
    <property type="term" value="F:electron transporter, transferring electrons within cytochrome b6/f complex of photosystem II activity"/>
    <property type="evidence" value="ECO:0007669"/>
    <property type="project" value="UniProtKB-UniRule"/>
</dbReference>
<dbReference type="GO" id="GO:0015979">
    <property type="term" value="P:photosynthesis"/>
    <property type="evidence" value="ECO:0007669"/>
    <property type="project" value="UniProtKB-KW"/>
</dbReference>
<dbReference type="HAMAP" id="MF_00433">
    <property type="entry name" value="Cytb6_f_PetL"/>
    <property type="match status" value="1"/>
</dbReference>
<dbReference type="InterPro" id="IPR007802">
    <property type="entry name" value="Cyt_b6/f_cplx_su6"/>
</dbReference>
<dbReference type="PANTHER" id="PTHR37266">
    <property type="entry name" value="CYTOCHROME B6-F COMPLEX SUBUNIT 6"/>
    <property type="match status" value="1"/>
</dbReference>
<dbReference type="PANTHER" id="PTHR37266:SF1">
    <property type="entry name" value="CYTOCHROME B6-F COMPLEX SUBUNIT 6"/>
    <property type="match status" value="1"/>
</dbReference>
<dbReference type="Pfam" id="PF05115">
    <property type="entry name" value="PetL"/>
    <property type="match status" value="1"/>
</dbReference>
<dbReference type="SUPFAM" id="SSF103436">
    <property type="entry name" value="PetL subunit of the cytochrome b6f complex"/>
    <property type="match status" value="1"/>
</dbReference>
<sequence length="31" mass="3416">MLTLTSYFGFLLAALTITSALFIGLNKIRLI</sequence>
<protein>
    <recommendedName>
        <fullName evidence="1">Cytochrome b6-f complex subunit 6</fullName>
    </recommendedName>
    <alternativeName>
        <fullName evidence="1">Cytochrome b6-f complex subunit PetL</fullName>
    </alternativeName>
    <alternativeName>
        <fullName evidence="1">Cytochrome b6-f complex subunit VI</fullName>
    </alternativeName>
</protein>
<organism>
    <name type="scientific">Amaranthus cruentus</name>
    <name type="common">Purple amaranth</name>
    <name type="synonym">Amaranthus paniculatus</name>
    <dbReference type="NCBI Taxonomy" id="117272"/>
    <lineage>
        <taxon>Eukaryota</taxon>
        <taxon>Viridiplantae</taxon>
        <taxon>Streptophyta</taxon>
        <taxon>Embryophyta</taxon>
        <taxon>Tracheophyta</taxon>
        <taxon>Spermatophyta</taxon>
        <taxon>Magnoliopsida</taxon>
        <taxon>eudicotyledons</taxon>
        <taxon>Gunneridae</taxon>
        <taxon>Pentapetalae</taxon>
        <taxon>Caryophyllales</taxon>
        <taxon>Amaranthaceae</taxon>
        <taxon>Amaranthus</taxon>
    </lineage>
</organism>
<gene>
    <name evidence="1" type="primary">petL</name>
</gene>
<comment type="function">
    <text evidence="1">Component of the cytochrome b6-f complex, which mediates electron transfer between photosystem II (PSII) and photosystem I (PSI), cyclic electron flow around PSI, and state transitions. PetL is important for photoautotrophic growth as well as for electron transfer efficiency and stability of the cytochrome b6-f complex.</text>
</comment>
<comment type="subunit">
    <text evidence="1">The 4 large subunits of the cytochrome b6-f complex are cytochrome b6, subunit IV (17 kDa polypeptide, PetD), cytochrome f and the Rieske protein, while the 4 small subunits are PetG, PetL, PetM and PetN. The complex functions as a dimer.</text>
</comment>
<comment type="subcellular location">
    <subcellularLocation>
        <location evidence="1">Plastid</location>
        <location evidence="1">Chloroplast thylakoid membrane</location>
        <topology evidence="1">Single-pass membrane protein</topology>
    </subcellularLocation>
</comment>
<comment type="RNA editing">
    <location>
        <position position="2" evidence="2"/>
    </location>
</comment>
<comment type="similarity">
    <text evidence="1">Belongs to the PetL family.</text>
</comment>
<reference key="1">
    <citation type="journal article" date="2004" name="Nucleic Acids Res.">
        <title>Rapid evolution of RNA editing sites in a small non-essential plastid gene.</title>
        <authorList>
            <person name="Fiebig A."/>
            <person name="Stegemann S."/>
            <person name="Bock R."/>
        </authorList>
    </citation>
    <scope>NUCLEOTIDE SEQUENCE [GENOMIC DNA]</scope>
    <scope>RNA EDITING</scope>
    <source>
        <tissue>Leaf</tissue>
    </source>
</reference>
<name>PETL_AMACR</name>
<evidence type="ECO:0000255" key="1">
    <source>
        <dbReference type="HAMAP-Rule" id="MF_00433"/>
    </source>
</evidence>
<evidence type="ECO:0000269" key="2">
    <source>
    </source>
</evidence>
<proteinExistence type="evidence at transcript level"/>